<name>RNC_LACJO</name>
<proteinExistence type="inferred from homology"/>
<comment type="function">
    <text evidence="1">Digests double-stranded RNA. Involved in the processing of primary rRNA transcript to yield the immediate precursors to the large and small rRNAs (23S and 16S). Processes some mRNAs, and tRNAs when they are encoded in the rRNA operon. Processes pre-crRNA and tracrRNA of type II CRISPR loci if present in the organism.</text>
</comment>
<comment type="catalytic activity">
    <reaction evidence="1">
        <text>Endonucleolytic cleavage to 5'-phosphomonoester.</text>
        <dbReference type="EC" id="3.1.26.3"/>
    </reaction>
</comment>
<comment type="cofactor">
    <cofactor evidence="1">
        <name>Mg(2+)</name>
        <dbReference type="ChEBI" id="CHEBI:18420"/>
    </cofactor>
</comment>
<comment type="subunit">
    <text evidence="1">Homodimer.</text>
</comment>
<comment type="subcellular location">
    <subcellularLocation>
        <location evidence="1">Cytoplasm</location>
    </subcellularLocation>
</comment>
<comment type="similarity">
    <text evidence="1">Belongs to the ribonuclease III family.</text>
</comment>
<accession>Q74IP8</accession>
<keyword id="KW-0963">Cytoplasm</keyword>
<keyword id="KW-0255">Endonuclease</keyword>
<keyword id="KW-0378">Hydrolase</keyword>
<keyword id="KW-0460">Magnesium</keyword>
<keyword id="KW-0479">Metal-binding</keyword>
<keyword id="KW-0507">mRNA processing</keyword>
<keyword id="KW-0540">Nuclease</keyword>
<keyword id="KW-0694">RNA-binding</keyword>
<keyword id="KW-0698">rRNA processing</keyword>
<keyword id="KW-0699">rRNA-binding</keyword>
<keyword id="KW-0819">tRNA processing</keyword>
<feature type="chain" id="PRO_0000228540" description="Ribonuclease 3">
    <location>
        <begin position="1"/>
        <end position="226"/>
    </location>
</feature>
<feature type="domain" description="RNase III" evidence="1">
    <location>
        <begin position="7"/>
        <end position="134"/>
    </location>
</feature>
<feature type="domain" description="DRBM" evidence="1">
    <location>
        <begin position="160"/>
        <end position="226"/>
    </location>
</feature>
<feature type="region of interest" description="Disordered" evidence="2">
    <location>
        <begin position="201"/>
        <end position="226"/>
    </location>
</feature>
<feature type="compositionally biased region" description="Low complexity" evidence="2">
    <location>
        <begin position="214"/>
        <end position="226"/>
    </location>
</feature>
<feature type="active site" evidence="1">
    <location>
        <position position="51"/>
    </location>
</feature>
<feature type="active site" evidence="1">
    <location>
        <position position="123"/>
    </location>
</feature>
<feature type="binding site" evidence="1">
    <location>
        <position position="47"/>
    </location>
    <ligand>
        <name>Mg(2+)</name>
        <dbReference type="ChEBI" id="CHEBI:18420"/>
    </ligand>
</feature>
<feature type="binding site" evidence="1">
    <location>
        <position position="120"/>
    </location>
    <ligand>
        <name>Mg(2+)</name>
        <dbReference type="ChEBI" id="CHEBI:18420"/>
    </ligand>
</feature>
<feature type="binding site" evidence="1">
    <location>
        <position position="123"/>
    </location>
    <ligand>
        <name>Mg(2+)</name>
        <dbReference type="ChEBI" id="CHEBI:18420"/>
    </ligand>
</feature>
<organism>
    <name type="scientific">Lactobacillus johnsonii (strain CNCM I-12250 / La1 / NCC 533)</name>
    <dbReference type="NCBI Taxonomy" id="257314"/>
    <lineage>
        <taxon>Bacteria</taxon>
        <taxon>Bacillati</taxon>
        <taxon>Bacillota</taxon>
        <taxon>Bacilli</taxon>
        <taxon>Lactobacillales</taxon>
        <taxon>Lactobacillaceae</taxon>
        <taxon>Lactobacillus</taxon>
    </lineage>
</organism>
<evidence type="ECO:0000255" key="1">
    <source>
        <dbReference type="HAMAP-Rule" id="MF_00104"/>
    </source>
</evidence>
<evidence type="ECO:0000256" key="2">
    <source>
        <dbReference type="SAM" id="MobiDB-lite"/>
    </source>
</evidence>
<reference key="1">
    <citation type="journal article" date="2004" name="Proc. Natl. Acad. Sci. U.S.A.">
        <title>The genome sequence of the probiotic intestinal bacterium Lactobacillus johnsonii NCC 533.</title>
        <authorList>
            <person name="Pridmore R.D."/>
            <person name="Berger B."/>
            <person name="Desiere F."/>
            <person name="Vilanova D."/>
            <person name="Barretto C."/>
            <person name="Pittet A.-C."/>
            <person name="Zwahlen M.-C."/>
            <person name="Rouvet M."/>
            <person name="Altermann E."/>
            <person name="Barrangou R."/>
            <person name="Mollet B."/>
            <person name="Mercenier A."/>
            <person name="Klaenhammer T."/>
            <person name="Arigoni F."/>
            <person name="Schell M.A."/>
        </authorList>
    </citation>
    <scope>NUCLEOTIDE SEQUENCE [LARGE SCALE GENOMIC DNA]</scope>
    <source>
        <strain>CNCM I-1225 / La1 / NCC 533</strain>
    </source>
</reference>
<dbReference type="EC" id="3.1.26.3" evidence="1"/>
<dbReference type="EMBL" id="AE017198">
    <property type="protein sequence ID" value="AAS09289.1"/>
    <property type="molecule type" value="Genomic_DNA"/>
</dbReference>
<dbReference type="RefSeq" id="WP_004897094.1">
    <property type="nucleotide sequence ID" value="NC_005362.1"/>
</dbReference>
<dbReference type="SMR" id="Q74IP8"/>
<dbReference type="KEGG" id="ljo:LJ_1521"/>
<dbReference type="eggNOG" id="COG0571">
    <property type="taxonomic scope" value="Bacteria"/>
</dbReference>
<dbReference type="HOGENOM" id="CLU_000907_1_3_9"/>
<dbReference type="Proteomes" id="UP000000581">
    <property type="component" value="Chromosome"/>
</dbReference>
<dbReference type="GO" id="GO:0005737">
    <property type="term" value="C:cytoplasm"/>
    <property type="evidence" value="ECO:0007669"/>
    <property type="project" value="UniProtKB-SubCell"/>
</dbReference>
<dbReference type="GO" id="GO:0003725">
    <property type="term" value="F:double-stranded RNA binding"/>
    <property type="evidence" value="ECO:0007669"/>
    <property type="project" value="TreeGrafter"/>
</dbReference>
<dbReference type="GO" id="GO:0046872">
    <property type="term" value="F:metal ion binding"/>
    <property type="evidence" value="ECO:0007669"/>
    <property type="project" value="UniProtKB-KW"/>
</dbReference>
<dbReference type="GO" id="GO:0004525">
    <property type="term" value="F:ribonuclease III activity"/>
    <property type="evidence" value="ECO:0007669"/>
    <property type="project" value="UniProtKB-UniRule"/>
</dbReference>
<dbReference type="GO" id="GO:0019843">
    <property type="term" value="F:rRNA binding"/>
    <property type="evidence" value="ECO:0007669"/>
    <property type="project" value="UniProtKB-KW"/>
</dbReference>
<dbReference type="GO" id="GO:0006397">
    <property type="term" value="P:mRNA processing"/>
    <property type="evidence" value="ECO:0007669"/>
    <property type="project" value="UniProtKB-UniRule"/>
</dbReference>
<dbReference type="GO" id="GO:0010468">
    <property type="term" value="P:regulation of gene expression"/>
    <property type="evidence" value="ECO:0007669"/>
    <property type="project" value="TreeGrafter"/>
</dbReference>
<dbReference type="GO" id="GO:0006364">
    <property type="term" value="P:rRNA processing"/>
    <property type="evidence" value="ECO:0007669"/>
    <property type="project" value="UniProtKB-UniRule"/>
</dbReference>
<dbReference type="GO" id="GO:0008033">
    <property type="term" value="P:tRNA processing"/>
    <property type="evidence" value="ECO:0007669"/>
    <property type="project" value="UniProtKB-KW"/>
</dbReference>
<dbReference type="CDD" id="cd10845">
    <property type="entry name" value="DSRM_RNAse_III_family"/>
    <property type="match status" value="1"/>
</dbReference>
<dbReference type="CDD" id="cd00593">
    <property type="entry name" value="RIBOc"/>
    <property type="match status" value="1"/>
</dbReference>
<dbReference type="FunFam" id="1.10.1520.10:FF:000001">
    <property type="entry name" value="Ribonuclease 3"/>
    <property type="match status" value="1"/>
</dbReference>
<dbReference type="Gene3D" id="3.30.160.20">
    <property type="match status" value="1"/>
</dbReference>
<dbReference type="Gene3D" id="1.10.1520.10">
    <property type="entry name" value="Ribonuclease III domain"/>
    <property type="match status" value="1"/>
</dbReference>
<dbReference type="HAMAP" id="MF_00104">
    <property type="entry name" value="RNase_III"/>
    <property type="match status" value="1"/>
</dbReference>
<dbReference type="InterPro" id="IPR014720">
    <property type="entry name" value="dsRBD_dom"/>
</dbReference>
<dbReference type="InterPro" id="IPR011907">
    <property type="entry name" value="RNase_III"/>
</dbReference>
<dbReference type="InterPro" id="IPR000999">
    <property type="entry name" value="RNase_III_dom"/>
</dbReference>
<dbReference type="InterPro" id="IPR036389">
    <property type="entry name" value="RNase_III_sf"/>
</dbReference>
<dbReference type="NCBIfam" id="TIGR02191">
    <property type="entry name" value="RNaseIII"/>
    <property type="match status" value="1"/>
</dbReference>
<dbReference type="PANTHER" id="PTHR11207:SF0">
    <property type="entry name" value="RIBONUCLEASE 3"/>
    <property type="match status" value="1"/>
</dbReference>
<dbReference type="PANTHER" id="PTHR11207">
    <property type="entry name" value="RIBONUCLEASE III"/>
    <property type="match status" value="1"/>
</dbReference>
<dbReference type="Pfam" id="PF00035">
    <property type="entry name" value="dsrm"/>
    <property type="match status" value="1"/>
</dbReference>
<dbReference type="Pfam" id="PF14622">
    <property type="entry name" value="Ribonucleas_3_3"/>
    <property type="match status" value="1"/>
</dbReference>
<dbReference type="SMART" id="SM00358">
    <property type="entry name" value="DSRM"/>
    <property type="match status" value="1"/>
</dbReference>
<dbReference type="SMART" id="SM00535">
    <property type="entry name" value="RIBOc"/>
    <property type="match status" value="1"/>
</dbReference>
<dbReference type="SUPFAM" id="SSF54768">
    <property type="entry name" value="dsRNA-binding domain-like"/>
    <property type="match status" value="1"/>
</dbReference>
<dbReference type="SUPFAM" id="SSF69065">
    <property type="entry name" value="RNase III domain-like"/>
    <property type="match status" value="1"/>
</dbReference>
<dbReference type="PROSITE" id="PS50137">
    <property type="entry name" value="DS_RBD"/>
    <property type="match status" value="1"/>
</dbReference>
<dbReference type="PROSITE" id="PS00517">
    <property type="entry name" value="RNASE_3_1"/>
    <property type="match status" value="1"/>
</dbReference>
<dbReference type="PROSITE" id="PS50142">
    <property type="entry name" value="RNASE_3_2"/>
    <property type="match status" value="1"/>
</dbReference>
<gene>
    <name evidence="1" type="primary">rnc</name>
    <name type="ordered locus">LJ_1521</name>
</gene>
<sequence>MVSVAFKQNLKKKYGIKFNNEKLLEDAFTHSSYANEHPGRKDYEKLEFLGDAVLELAVSDYLYRHFPRLNEGELTRMRSNIVRTEGFSEFAIECGFPEEINLGKGEEKAGARKRKTLLEDVFEAFNGALFLDQGMPAVQHFLHLTVYPLIAEGDFNASRDYKTELQERLQVNGPVKIEYQVISEDESKPSFKVQLLVNGEKVSEGQGRNKKAAEQQAAQAALDKNK</sequence>
<protein>
    <recommendedName>
        <fullName evidence="1">Ribonuclease 3</fullName>
        <ecNumber evidence="1">3.1.26.3</ecNumber>
    </recommendedName>
    <alternativeName>
        <fullName evidence="1">Ribonuclease III</fullName>
        <shortName evidence="1">RNase III</shortName>
    </alternativeName>
</protein>